<protein>
    <recommendedName>
        <fullName evidence="1">Polyribonucleotide nucleotidyltransferase</fullName>
        <ecNumber evidence="1">2.7.7.8</ecNumber>
    </recommendedName>
    <alternativeName>
        <fullName evidence="1">Polynucleotide phosphorylase</fullName>
        <shortName evidence="1">PNPase</shortName>
    </alternativeName>
</protein>
<name>PNP_STRA5</name>
<feature type="chain" id="PRO_0000329866" description="Polyribonucleotide nucleotidyltransferase">
    <location>
        <begin position="1"/>
        <end position="709"/>
    </location>
</feature>
<feature type="domain" description="KH" evidence="1">
    <location>
        <begin position="556"/>
        <end position="615"/>
    </location>
</feature>
<feature type="domain" description="S1 motif" evidence="1">
    <location>
        <begin position="625"/>
        <end position="693"/>
    </location>
</feature>
<feature type="binding site" evidence="1">
    <location>
        <position position="489"/>
    </location>
    <ligand>
        <name>Mg(2+)</name>
        <dbReference type="ChEBI" id="CHEBI:18420"/>
    </ligand>
</feature>
<feature type="binding site" evidence="1">
    <location>
        <position position="495"/>
    </location>
    <ligand>
        <name>Mg(2+)</name>
        <dbReference type="ChEBI" id="CHEBI:18420"/>
    </ligand>
</feature>
<dbReference type="EC" id="2.7.7.8" evidence="1"/>
<dbReference type="EMBL" id="AE009948">
    <property type="protein sequence ID" value="AAM99110.1"/>
    <property type="molecule type" value="Genomic_DNA"/>
</dbReference>
<dbReference type="RefSeq" id="NP_687238.1">
    <property type="nucleotide sequence ID" value="NC_004116.1"/>
</dbReference>
<dbReference type="RefSeq" id="WP_000043847.1">
    <property type="nucleotide sequence ID" value="NC_004116.1"/>
</dbReference>
<dbReference type="SMR" id="Q8E1Z8"/>
<dbReference type="STRING" id="208435.SAG0203"/>
<dbReference type="DNASU" id="1012977"/>
<dbReference type="KEGG" id="sag:SAG0203"/>
<dbReference type="PATRIC" id="fig|208435.3.peg.203"/>
<dbReference type="HOGENOM" id="CLU_004217_2_2_9"/>
<dbReference type="OrthoDB" id="9804305at2"/>
<dbReference type="Proteomes" id="UP000000821">
    <property type="component" value="Chromosome"/>
</dbReference>
<dbReference type="GO" id="GO:0005829">
    <property type="term" value="C:cytosol"/>
    <property type="evidence" value="ECO:0007669"/>
    <property type="project" value="TreeGrafter"/>
</dbReference>
<dbReference type="GO" id="GO:0000175">
    <property type="term" value="F:3'-5'-RNA exonuclease activity"/>
    <property type="evidence" value="ECO:0007669"/>
    <property type="project" value="TreeGrafter"/>
</dbReference>
<dbReference type="GO" id="GO:0000287">
    <property type="term" value="F:magnesium ion binding"/>
    <property type="evidence" value="ECO:0007669"/>
    <property type="project" value="UniProtKB-UniRule"/>
</dbReference>
<dbReference type="GO" id="GO:0004654">
    <property type="term" value="F:polyribonucleotide nucleotidyltransferase activity"/>
    <property type="evidence" value="ECO:0007669"/>
    <property type="project" value="UniProtKB-UniRule"/>
</dbReference>
<dbReference type="GO" id="GO:0003723">
    <property type="term" value="F:RNA binding"/>
    <property type="evidence" value="ECO:0007669"/>
    <property type="project" value="UniProtKB-UniRule"/>
</dbReference>
<dbReference type="GO" id="GO:0006402">
    <property type="term" value="P:mRNA catabolic process"/>
    <property type="evidence" value="ECO:0007669"/>
    <property type="project" value="UniProtKB-UniRule"/>
</dbReference>
<dbReference type="GO" id="GO:0006396">
    <property type="term" value="P:RNA processing"/>
    <property type="evidence" value="ECO:0007669"/>
    <property type="project" value="InterPro"/>
</dbReference>
<dbReference type="CDD" id="cd02393">
    <property type="entry name" value="KH-I_PNPase"/>
    <property type="match status" value="1"/>
</dbReference>
<dbReference type="CDD" id="cd11363">
    <property type="entry name" value="RNase_PH_PNPase_1"/>
    <property type="match status" value="1"/>
</dbReference>
<dbReference type="CDD" id="cd11364">
    <property type="entry name" value="RNase_PH_PNPase_2"/>
    <property type="match status" value="1"/>
</dbReference>
<dbReference type="FunFam" id="2.40.50.140:FF:000023">
    <property type="entry name" value="Polyribonucleotide nucleotidyltransferase"/>
    <property type="match status" value="1"/>
</dbReference>
<dbReference type="FunFam" id="3.30.1370.10:FF:000001">
    <property type="entry name" value="Polyribonucleotide nucleotidyltransferase"/>
    <property type="match status" value="1"/>
</dbReference>
<dbReference type="FunFam" id="3.30.230.70:FF:000001">
    <property type="entry name" value="Polyribonucleotide nucleotidyltransferase"/>
    <property type="match status" value="1"/>
</dbReference>
<dbReference type="FunFam" id="3.30.230.70:FF:000002">
    <property type="entry name" value="Polyribonucleotide nucleotidyltransferase"/>
    <property type="match status" value="1"/>
</dbReference>
<dbReference type="Gene3D" id="3.30.230.70">
    <property type="entry name" value="GHMP Kinase, N-terminal domain"/>
    <property type="match status" value="2"/>
</dbReference>
<dbReference type="Gene3D" id="3.30.1370.10">
    <property type="entry name" value="K Homology domain, type 1"/>
    <property type="match status" value="1"/>
</dbReference>
<dbReference type="Gene3D" id="2.40.50.140">
    <property type="entry name" value="Nucleic acid-binding proteins"/>
    <property type="match status" value="1"/>
</dbReference>
<dbReference type="HAMAP" id="MF_01595">
    <property type="entry name" value="PNPase"/>
    <property type="match status" value="1"/>
</dbReference>
<dbReference type="InterPro" id="IPR001247">
    <property type="entry name" value="ExoRNase_PH_dom1"/>
</dbReference>
<dbReference type="InterPro" id="IPR015847">
    <property type="entry name" value="ExoRNase_PH_dom2"/>
</dbReference>
<dbReference type="InterPro" id="IPR036345">
    <property type="entry name" value="ExoRNase_PH_dom2_sf"/>
</dbReference>
<dbReference type="InterPro" id="IPR004087">
    <property type="entry name" value="KH_dom"/>
</dbReference>
<dbReference type="InterPro" id="IPR004088">
    <property type="entry name" value="KH_dom_type_1"/>
</dbReference>
<dbReference type="InterPro" id="IPR036612">
    <property type="entry name" value="KH_dom_type_1_sf"/>
</dbReference>
<dbReference type="InterPro" id="IPR012340">
    <property type="entry name" value="NA-bd_OB-fold"/>
</dbReference>
<dbReference type="InterPro" id="IPR012162">
    <property type="entry name" value="PNPase"/>
</dbReference>
<dbReference type="InterPro" id="IPR027408">
    <property type="entry name" value="PNPase/RNase_PH_dom_sf"/>
</dbReference>
<dbReference type="InterPro" id="IPR015848">
    <property type="entry name" value="PNPase_PH_RNA-bd_bac/org-type"/>
</dbReference>
<dbReference type="InterPro" id="IPR036456">
    <property type="entry name" value="PNPase_PH_RNA-bd_sf"/>
</dbReference>
<dbReference type="InterPro" id="IPR020568">
    <property type="entry name" value="Ribosomal_Su5_D2-typ_SF"/>
</dbReference>
<dbReference type="InterPro" id="IPR003029">
    <property type="entry name" value="S1_domain"/>
</dbReference>
<dbReference type="NCBIfam" id="TIGR03591">
    <property type="entry name" value="polynuc_phos"/>
    <property type="match status" value="1"/>
</dbReference>
<dbReference type="NCBIfam" id="NF008805">
    <property type="entry name" value="PRK11824.1"/>
    <property type="match status" value="1"/>
</dbReference>
<dbReference type="PANTHER" id="PTHR11252">
    <property type="entry name" value="POLYRIBONUCLEOTIDE NUCLEOTIDYLTRANSFERASE"/>
    <property type="match status" value="1"/>
</dbReference>
<dbReference type="PANTHER" id="PTHR11252:SF0">
    <property type="entry name" value="POLYRIBONUCLEOTIDE NUCLEOTIDYLTRANSFERASE 1, MITOCHONDRIAL"/>
    <property type="match status" value="1"/>
</dbReference>
<dbReference type="Pfam" id="PF00013">
    <property type="entry name" value="KH_1"/>
    <property type="match status" value="1"/>
</dbReference>
<dbReference type="Pfam" id="PF03726">
    <property type="entry name" value="PNPase"/>
    <property type="match status" value="1"/>
</dbReference>
<dbReference type="Pfam" id="PF01138">
    <property type="entry name" value="RNase_PH"/>
    <property type="match status" value="2"/>
</dbReference>
<dbReference type="Pfam" id="PF03725">
    <property type="entry name" value="RNase_PH_C"/>
    <property type="match status" value="2"/>
</dbReference>
<dbReference type="Pfam" id="PF00575">
    <property type="entry name" value="S1"/>
    <property type="match status" value="1"/>
</dbReference>
<dbReference type="PIRSF" id="PIRSF005499">
    <property type="entry name" value="PNPase"/>
    <property type="match status" value="1"/>
</dbReference>
<dbReference type="SMART" id="SM00322">
    <property type="entry name" value="KH"/>
    <property type="match status" value="1"/>
</dbReference>
<dbReference type="SMART" id="SM00316">
    <property type="entry name" value="S1"/>
    <property type="match status" value="1"/>
</dbReference>
<dbReference type="SUPFAM" id="SSF54791">
    <property type="entry name" value="Eukaryotic type KH-domain (KH-domain type I)"/>
    <property type="match status" value="1"/>
</dbReference>
<dbReference type="SUPFAM" id="SSF50249">
    <property type="entry name" value="Nucleic acid-binding proteins"/>
    <property type="match status" value="1"/>
</dbReference>
<dbReference type="SUPFAM" id="SSF46915">
    <property type="entry name" value="Polynucleotide phosphorylase/guanosine pentaphosphate synthase (PNPase/GPSI), domain 3"/>
    <property type="match status" value="1"/>
</dbReference>
<dbReference type="SUPFAM" id="SSF55666">
    <property type="entry name" value="Ribonuclease PH domain 2-like"/>
    <property type="match status" value="2"/>
</dbReference>
<dbReference type="SUPFAM" id="SSF54211">
    <property type="entry name" value="Ribosomal protein S5 domain 2-like"/>
    <property type="match status" value="2"/>
</dbReference>
<dbReference type="PROSITE" id="PS50084">
    <property type="entry name" value="KH_TYPE_1"/>
    <property type="match status" value="1"/>
</dbReference>
<dbReference type="PROSITE" id="PS50126">
    <property type="entry name" value="S1"/>
    <property type="match status" value="1"/>
</dbReference>
<accession>Q8E1Z8</accession>
<proteinExistence type="inferred from homology"/>
<gene>
    <name evidence="1" type="primary">pnp</name>
    <name type="ordered locus">SAG0203</name>
</gene>
<organism>
    <name type="scientific">Streptococcus agalactiae serotype V (strain ATCC BAA-611 / 2603 V/R)</name>
    <dbReference type="NCBI Taxonomy" id="208435"/>
    <lineage>
        <taxon>Bacteria</taxon>
        <taxon>Bacillati</taxon>
        <taxon>Bacillota</taxon>
        <taxon>Bacilli</taxon>
        <taxon>Lactobacillales</taxon>
        <taxon>Streptococcaceae</taxon>
        <taxon>Streptococcus</taxon>
    </lineage>
</organism>
<evidence type="ECO:0000255" key="1">
    <source>
        <dbReference type="HAMAP-Rule" id="MF_01595"/>
    </source>
</evidence>
<sequence>MSKQVFEMIFAGKKLVVETGQVAKQANGSVVVRYGDSTVLTAAVMSKKMSTGDFFPLQVNYEEKMYAAGKFPGGFNKREGRPSTDATLTARLIDRPIRPMFAEGFRNEVQVINTVLSFDENASAPMAAMFGSSLALSISDIPFNGPIAGVQVAYVDGNFIINPTAQEQEASALELTVAGTKEAINMVESGAKELSEEIMLEALLKGHEAVCELIAFQEEIVTAIGKEKAEVELLQVDPELQAEIIATHNIALQAAVQVEEKKAREAATEAVKEVVIGEYEARYAEHEEYDRIMRDVAEILEQMEHAEVRRLITEDKIRPDGRRVDEIRPLDAEIDFLPQVHGSGLFTRGQTQALSVLTLAPMGEAQIIDGLTPEYKKRFMHHYNFPQYSVGETGRYGAAGRREIGHGALGERALEQVLPRLEEFPYAIRLVAEVLESNGSSSQASICAGTLALMAGGVPIKAPVAGIAMGLISDGTNYTVLTDIQGLEDHFGDMDFKVAGTREGITALQMDIKIEGITPQILEEALAQAKKARFEILDVLHGAIAEPRPQLAPTAPKIDMIKIDVDKIKVVIGKGGETIDKIIAETGVKIDIDEEGNVSIFSSDQAAIDRTKDIIASLVREAKVGEVYHAKVVRIEKFGAFVNLFDKTDALVHISEIAWTRTANVADVLEIGEEVDVKVIKIDDKGRVDASMKALLPRPPKADNPKKES</sequence>
<reference key="1">
    <citation type="journal article" date="2002" name="Proc. Natl. Acad. Sci. U.S.A.">
        <title>Complete genome sequence and comparative genomic analysis of an emerging human pathogen, serotype V Streptococcus agalactiae.</title>
        <authorList>
            <person name="Tettelin H."/>
            <person name="Masignani V."/>
            <person name="Cieslewicz M.J."/>
            <person name="Eisen J.A."/>
            <person name="Peterson S.N."/>
            <person name="Wessels M.R."/>
            <person name="Paulsen I.T."/>
            <person name="Nelson K.E."/>
            <person name="Margarit I."/>
            <person name="Read T.D."/>
            <person name="Madoff L.C."/>
            <person name="Wolf A.M."/>
            <person name="Beanan M.J."/>
            <person name="Brinkac L.M."/>
            <person name="Daugherty S.C."/>
            <person name="DeBoy R.T."/>
            <person name="Durkin A.S."/>
            <person name="Kolonay J.F."/>
            <person name="Madupu R."/>
            <person name="Lewis M.R."/>
            <person name="Radune D."/>
            <person name="Fedorova N.B."/>
            <person name="Scanlan D."/>
            <person name="Khouri H.M."/>
            <person name="Mulligan S."/>
            <person name="Carty H.A."/>
            <person name="Cline R.T."/>
            <person name="Van Aken S.E."/>
            <person name="Gill J."/>
            <person name="Scarselli M."/>
            <person name="Mora M."/>
            <person name="Iacobini E.T."/>
            <person name="Brettoni C."/>
            <person name="Galli G."/>
            <person name="Mariani M."/>
            <person name="Vegni F."/>
            <person name="Maione D."/>
            <person name="Rinaudo D."/>
            <person name="Rappuoli R."/>
            <person name="Telford J.L."/>
            <person name="Kasper D.L."/>
            <person name="Grandi G."/>
            <person name="Fraser C.M."/>
        </authorList>
    </citation>
    <scope>NUCLEOTIDE SEQUENCE [LARGE SCALE GENOMIC DNA]</scope>
    <source>
        <strain>ATCC BAA-611 / 2603 V/R</strain>
    </source>
</reference>
<keyword id="KW-0963">Cytoplasm</keyword>
<keyword id="KW-0460">Magnesium</keyword>
<keyword id="KW-0479">Metal-binding</keyword>
<keyword id="KW-0548">Nucleotidyltransferase</keyword>
<keyword id="KW-1185">Reference proteome</keyword>
<keyword id="KW-0694">RNA-binding</keyword>
<keyword id="KW-0808">Transferase</keyword>
<comment type="function">
    <text evidence="1">Involved in mRNA degradation. Catalyzes the phosphorolysis of single-stranded polyribonucleotides processively in the 3'- to 5'-direction.</text>
</comment>
<comment type="catalytic activity">
    <reaction evidence="1">
        <text>RNA(n+1) + phosphate = RNA(n) + a ribonucleoside 5'-diphosphate</text>
        <dbReference type="Rhea" id="RHEA:22096"/>
        <dbReference type="Rhea" id="RHEA-COMP:14527"/>
        <dbReference type="Rhea" id="RHEA-COMP:17342"/>
        <dbReference type="ChEBI" id="CHEBI:43474"/>
        <dbReference type="ChEBI" id="CHEBI:57930"/>
        <dbReference type="ChEBI" id="CHEBI:140395"/>
        <dbReference type="EC" id="2.7.7.8"/>
    </reaction>
</comment>
<comment type="cofactor">
    <cofactor evidence="1">
        <name>Mg(2+)</name>
        <dbReference type="ChEBI" id="CHEBI:18420"/>
    </cofactor>
</comment>
<comment type="subcellular location">
    <subcellularLocation>
        <location evidence="1">Cytoplasm</location>
    </subcellularLocation>
</comment>
<comment type="similarity">
    <text evidence="1">Belongs to the polyribonucleotide nucleotidyltransferase family.</text>
</comment>